<sequence>MSKHKVSPATIAKNKKALHDYTILEKFEAGIVLQGWEVKSIRAGKVQMVDSHVHIKHGEAWLFNCLITPLLSASTHVVADAAATRKLLLNRREINKIMGRIEQKGFTCIPLSMYWKGPRVKVEIALAQGKKVHDKRQAQKDKDWAREKDRLFKKAYK</sequence>
<protein>
    <recommendedName>
        <fullName evidence="1">SsrA-binding protein</fullName>
    </recommendedName>
    <alternativeName>
        <fullName evidence="1">Small protein B</fullName>
    </alternativeName>
</protein>
<evidence type="ECO:0000255" key="1">
    <source>
        <dbReference type="HAMAP-Rule" id="MF_00023"/>
    </source>
</evidence>
<evidence type="ECO:0000256" key="2">
    <source>
        <dbReference type="SAM" id="MobiDB-lite"/>
    </source>
</evidence>
<name>SSRP_FRATF</name>
<feature type="chain" id="PRO_1000002058" description="SsrA-binding protein">
    <location>
        <begin position="1"/>
        <end position="157"/>
    </location>
</feature>
<feature type="region of interest" description="Disordered" evidence="2">
    <location>
        <begin position="132"/>
        <end position="157"/>
    </location>
</feature>
<feature type="compositionally biased region" description="Basic and acidic residues" evidence="2">
    <location>
        <begin position="135"/>
        <end position="157"/>
    </location>
</feature>
<reference key="1">
    <citation type="journal article" date="2009" name="PLoS ONE">
        <title>Complete genome sequence of Francisella tularensis subspecies holarctica FTNF002-00.</title>
        <authorList>
            <person name="Barabote R.D."/>
            <person name="Xie G."/>
            <person name="Brettin T.S."/>
            <person name="Hinrichs S.H."/>
            <person name="Fey P.D."/>
            <person name="Jay J.J."/>
            <person name="Engle J.L."/>
            <person name="Godbole S.D."/>
            <person name="Noronha J.M."/>
            <person name="Scheuermann R.H."/>
            <person name="Zhou L.W."/>
            <person name="Lion C."/>
            <person name="Dempsey M.P."/>
        </authorList>
    </citation>
    <scope>NUCLEOTIDE SEQUENCE [LARGE SCALE GENOMIC DNA]</scope>
    <source>
        <strain>FTNF002-00 / FTA</strain>
    </source>
</reference>
<gene>
    <name evidence="1" type="primary">smpB</name>
    <name type="ordered locus">FTA_0804</name>
</gene>
<organism>
    <name type="scientific">Francisella tularensis subsp. holarctica (strain FTNF002-00 / FTA)</name>
    <dbReference type="NCBI Taxonomy" id="458234"/>
    <lineage>
        <taxon>Bacteria</taxon>
        <taxon>Pseudomonadati</taxon>
        <taxon>Pseudomonadota</taxon>
        <taxon>Gammaproteobacteria</taxon>
        <taxon>Thiotrichales</taxon>
        <taxon>Francisellaceae</taxon>
        <taxon>Francisella</taxon>
    </lineage>
</organism>
<accession>A7NBC7</accession>
<keyword id="KW-0963">Cytoplasm</keyword>
<keyword id="KW-0694">RNA-binding</keyword>
<dbReference type="EMBL" id="CP000803">
    <property type="protein sequence ID" value="ABU61280.1"/>
    <property type="molecule type" value="Genomic_DNA"/>
</dbReference>
<dbReference type="RefSeq" id="WP_003015283.1">
    <property type="nucleotide sequence ID" value="NC_009749.1"/>
</dbReference>
<dbReference type="SMR" id="A7NBC7"/>
<dbReference type="KEGG" id="fta:FTA_0804"/>
<dbReference type="HOGENOM" id="CLU_108953_3_0_6"/>
<dbReference type="GO" id="GO:0005829">
    <property type="term" value="C:cytosol"/>
    <property type="evidence" value="ECO:0007669"/>
    <property type="project" value="TreeGrafter"/>
</dbReference>
<dbReference type="GO" id="GO:0003723">
    <property type="term" value="F:RNA binding"/>
    <property type="evidence" value="ECO:0007669"/>
    <property type="project" value="UniProtKB-UniRule"/>
</dbReference>
<dbReference type="GO" id="GO:0070929">
    <property type="term" value="P:trans-translation"/>
    <property type="evidence" value="ECO:0007669"/>
    <property type="project" value="UniProtKB-UniRule"/>
</dbReference>
<dbReference type="CDD" id="cd09294">
    <property type="entry name" value="SmpB"/>
    <property type="match status" value="1"/>
</dbReference>
<dbReference type="Gene3D" id="2.40.280.10">
    <property type="match status" value="1"/>
</dbReference>
<dbReference type="HAMAP" id="MF_00023">
    <property type="entry name" value="SmpB"/>
    <property type="match status" value="1"/>
</dbReference>
<dbReference type="InterPro" id="IPR023620">
    <property type="entry name" value="SmpB"/>
</dbReference>
<dbReference type="InterPro" id="IPR000037">
    <property type="entry name" value="SsrA-bd_prot"/>
</dbReference>
<dbReference type="InterPro" id="IPR020081">
    <property type="entry name" value="SsrA-bd_prot_CS"/>
</dbReference>
<dbReference type="NCBIfam" id="NF003843">
    <property type="entry name" value="PRK05422.1"/>
    <property type="match status" value="1"/>
</dbReference>
<dbReference type="NCBIfam" id="TIGR00086">
    <property type="entry name" value="smpB"/>
    <property type="match status" value="1"/>
</dbReference>
<dbReference type="PANTHER" id="PTHR30308:SF2">
    <property type="entry name" value="SSRA-BINDING PROTEIN"/>
    <property type="match status" value="1"/>
</dbReference>
<dbReference type="PANTHER" id="PTHR30308">
    <property type="entry name" value="TMRNA-BINDING COMPONENT OF TRANS-TRANSLATION TAGGING COMPLEX"/>
    <property type="match status" value="1"/>
</dbReference>
<dbReference type="Pfam" id="PF01668">
    <property type="entry name" value="SmpB"/>
    <property type="match status" value="1"/>
</dbReference>
<dbReference type="SUPFAM" id="SSF74982">
    <property type="entry name" value="Small protein B (SmpB)"/>
    <property type="match status" value="1"/>
</dbReference>
<dbReference type="PROSITE" id="PS01317">
    <property type="entry name" value="SSRP"/>
    <property type="match status" value="1"/>
</dbReference>
<comment type="function">
    <text evidence="1">Required for rescue of stalled ribosomes mediated by trans-translation. Binds to transfer-messenger RNA (tmRNA), required for stable association of tmRNA with ribosomes. tmRNA and SmpB together mimic tRNA shape, replacing the anticodon stem-loop with SmpB. tmRNA is encoded by the ssrA gene; the 2 termini fold to resemble tRNA(Ala) and it encodes a 'tag peptide', a short internal open reading frame. During trans-translation Ala-aminoacylated tmRNA acts like a tRNA, entering the A-site of stalled ribosomes, displacing the stalled mRNA. The ribosome then switches to translate the ORF on the tmRNA; the nascent peptide is terminated with the 'tag peptide' encoded by the tmRNA and targeted for degradation. The ribosome is freed to recommence translation, which seems to be the essential function of trans-translation.</text>
</comment>
<comment type="subcellular location">
    <subcellularLocation>
        <location evidence="1">Cytoplasm</location>
    </subcellularLocation>
    <text evidence="1">The tmRNA-SmpB complex associates with stalled 70S ribosomes.</text>
</comment>
<comment type="similarity">
    <text evidence="1">Belongs to the SmpB family.</text>
</comment>
<proteinExistence type="inferred from homology"/>